<organism>
    <name type="scientific">Haloarcula marismortui (strain ATCC 43049 / DSM 3752 / JCM 8966 / VKM B-1809)</name>
    <name type="common">Halobacterium marismortui</name>
    <dbReference type="NCBI Taxonomy" id="272569"/>
    <lineage>
        <taxon>Archaea</taxon>
        <taxon>Methanobacteriati</taxon>
        <taxon>Methanobacteriota</taxon>
        <taxon>Stenosarchaea group</taxon>
        <taxon>Halobacteria</taxon>
        <taxon>Halobacteriales</taxon>
        <taxon>Haloarculaceae</taxon>
        <taxon>Haloarcula</taxon>
    </lineage>
</organism>
<name>RPO11_HALMA</name>
<feature type="chain" id="PRO_0000149323" description="DNA-directed RNA polymerase subunit Rpo11">
    <location>
        <begin position="1"/>
        <end position="94"/>
    </location>
</feature>
<dbReference type="EC" id="2.7.7.6" evidence="1"/>
<dbReference type="EMBL" id="AY596297">
    <property type="protein sequence ID" value="AAV46325.1"/>
    <property type="molecule type" value="Genomic_DNA"/>
</dbReference>
<dbReference type="RefSeq" id="WP_004957000.1">
    <property type="nucleotide sequence ID" value="NZ_CP039138.1"/>
</dbReference>
<dbReference type="SMR" id="Q5V2C7"/>
<dbReference type="STRING" id="272569.rrnAC1396"/>
<dbReference type="PaxDb" id="272569-rrnAC1396"/>
<dbReference type="EnsemblBacteria" id="AAV46325">
    <property type="protein sequence ID" value="AAV46325"/>
    <property type="gene ID" value="rrnAC1396"/>
</dbReference>
<dbReference type="KEGG" id="hma:rrnAC1396"/>
<dbReference type="PATRIC" id="fig|272569.17.peg.2092"/>
<dbReference type="eggNOG" id="arCOG04111">
    <property type="taxonomic scope" value="Archaea"/>
</dbReference>
<dbReference type="HOGENOM" id="CLU_090381_5_0_2"/>
<dbReference type="Proteomes" id="UP000001169">
    <property type="component" value="Chromosome I"/>
</dbReference>
<dbReference type="GO" id="GO:0005737">
    <property type="term" value="C:cytoplasm"/>
    <property type="evidence" value="ECO:0007669"/>
    <property type="project" value="UniProtKB-SubCell"/>
</dbReference>
<dbReference type="GO" id="GO:0000428">
    <property type="term" value="C:DNA-directed RNA polymerase complex"/>
    <property type="evidence" value="ECO:0007669"/>
    <property type="project" value="UniProtKB-KW"/>
</dbReference>
<dbReference type="GO" id="GO:0003677">
    <property type="term" value="F:DNA binding"/>
    <property type="evidence" value="ECO:0007669"/>
    <property type="project" value="InterPro"/>
</dbReference>
<dbReference type="GO" id="GO:0003899">
    <property type="term" value="F:DNA-directed RNA polymerase activity"/>
    <property type="evidence" value="ECO:0007669"/>
    <property type="project" value="UniProtKB-UniRule"/>
</dbReference>
<dbReference type="GO" id="GO:0046983">
    <property type="term" value="F:protein dimerization activity"/>
    <property type="evidence" value="ECO:0007669"/>
    <property type="project" value="InterPro"/>
</dbReference>
<dbReference type="GO" id="GO:0006351">
    <property type="term" value="P:DNA-templated transcription"/>
    <property type="evidence" value="ECO:0007669"/>
    <property type="project" value="UniProtKB-UniRule"/>
</dbReference>
<dbReference type="CDD" id="cd06927">
    <property type="entry name" value="RNAP_L"/>
    <property type="match status" value="1"/>
</dbReference>
<dbReference type="Gene3D" id="3.30.1360.10">
    <property type="entry name" value="RNA polymerase, RBP11-like subunit"/>
    <property type="match status" value="1"/>
</dbReference>
<dbReference type="HAMAP" id="MF_00261">
    <property type="entry name" value="RNApol_arch_Rpo11"/>
    <property type="match status" value="1"/>
</dbReference>
<dbReference type="InterPro" id="IPR036603">
    <property type="entry name" value="RBP11-like"/>
</dbReference>
<dbReference type="InterPro" id="IPR009025">
    <property type="entry name" value="RBP11-like_dimer"/>
</dbReference>
<dbReference type="InterPro" id="IPR008193">
    <property type="entry name" value="RNA_pol_Rpb11_13-16kDa_CS"/>
</dbReference>
<dbReference type="InterPro" id="IPR022905">
    <property type="entry name" value="Rpo11-like"/>
</dbReference>
<dbReference type="NCBIfam" id="NF002236">
    <property type="entry name" value="PRK01146.1-5"/>
    <property type="match status" value="1"/>
</dbReference>
<dbReference type="Pfam" id="PF13656">
    <property type="entry name" value="RNA_pol_L_2"/>
    <property type="match status" value="1"/>
</dbReference>
<dbReference type="SUPFAM" id="SSF55257">
    <property type="entry name" value="RBP11-like subunits of RNA polymerase"/>
    <property type="match status" value="1"/>
</dbReference>
<dbReference type="PROSITE" id="PS01154">
    <property type="entry name" value="RNA_POL_L_13KD"/>
    <property type="match status" value="1"/>
</dbReference>
<keyword id="KW-0963">Cytoplasm</keyword>
<keyword id="KW-0240">DNA-directed RNA polymerase</keyword>
<keyword id="KW-0548">Nucleotidyltransferase</keyword>
<keyword id="KW-1185">Reference proteome</keyword>
<keyword id="KW-0804">Transcription</keyword>
<keyword id="KW-0808">Transferase</keyword>
<accession>Q5V2C7</accession>
<evidence type="ECO:0000255" key="1">
    <source>
        <dbReference type="HAMAP-Rule" id="MF_00261"/>
    </source>
</evidence>
<sequence>MDLRVIDKSDTELSIEIAGEDHTFMNVIKGALLETEGVTAATYDVNPEQSGGQTDPVLTIKTEEGVDALEALEDGTDAVIEKADNFTDAFEAAA</sequence>
<gene>
    <name evidence="1" type="primary">rpo11</name>
    <name evidence="1" type="synonym">rpoL</name>
    <name type="ordered locus">rrnAC1396</name>
</gene>
<reference key="1">
    <citation type="journal article" date="2004" name="Genome Res.">
        <title>Genome sequence of Haloarcula marismortui: a halophilic archaeon from the Dead Sea.</title>
        <authorList>
            <person name="Baliga N.S."/>
            <person name="Bonneau R."/>
            <person name="Facciotti M.T."/>
            <person name="Pan M."/>
            <person name="Glusman G."/>
            <person name="Deutsch E.W."/>
            <person name="Shannon P."/>
            <person name="Chiu Y."/>
            <person name="Weng R.S."/>
            <person name="Gan R.R."/>
            <person name="Hung P."/>
            <person name="Date S.V."/>
            <person name="Marcotte E."/>
            <person name="Hood L."/>
            <person name="Ng W.V."/>
        </authorList>
    </citation>
    <scope>NUCLEOTIDE SEQUENCE [LARGE SCALE GENOMIC DNA]</scope>
    <source>
        <strain>ATCC 43049 / DSM 3752 / JCM 8966 / VKM B-1809</strain>
    </source>
</reference>
<comment type="function">
    <text evidence="1">DNA-dependent RNA polymerase (RNAP) catalyzes the transcription of DNA into RNA using the four ribonucleoside triphosphates as substrates.</text>
</comment>
<comment type="catalytic activity">
    <reaction evidence="1">
        <text>RNA(n) + a ribonucleoside 5'-triphosphate = RNA(n+1) + diphosphate</text>
        <dbReference type="Rhea" id="RHEA:21248"/>
        <dbReference type="Rhea" id="RHEA-COMP:14527"/>
        <dbReference type="Rhea" id="RHEA-COMP:17342"/>
        <dbReference type="ChEBI" id="CHEBI:33019"/>
        <dbReference type="ChEBI" id="CHEBI:61557"/>
        <dbReference type="ChEBI" id="CHEBI:140395"/>
        <dbReference type="EC" id="2.7.7.6"/>
    </reaction>
</comment>
<comment type="subunit">
    <text evidence="1">Part of the RNA polymerase complex.</text>
</comment>
<comment type="subcellular location">
    <subcellularLocation>
        <location evidence="1">Cytoplasm</location>
    </subcellularLocation>
</comment>
<comment type="similarity">
    <text evidence="1">Belongs to the archaeal Rpo11/eukaryotic RPB11/RPC19 RNA polymerase subunit family.</text>
</comment>
<protein>
    <recommendedName>
        <fullName evidence="1">DNA-directed RNA polymerase subunit Rpo11</fullName>
        <ecNumber evidence="1">2.7.7.6</ecNumber>
    </recommendedName>
    <alternativeName>
        <fullName evidence="1">DNA-directed RNA polymerase subunit L</fullName>
    </alternativeName>
</protein>
<proteinExistence type="inferred from homology"/>